<organism>
    <name type="scientific">Acanthamoeba polyphaga mimivirus</name>
    <name type="common">APMV</name>
    <dbReference type="NCBI Taxonomy" id="212035"/>
    <lineage>
        <taxon>Viruses</taxon>
        <taxon>Varidnaviria</taxon>
        <taxon>Bamfordvirae</taxon>
        <taxon>Nucleocytoviricota</taxon>
        <taxon>Megaviricetes</taxon>
        <taxon>Imitervirales</taxon>
        <taxon>Mimiviridae</taxon>
        <taxon>Megamimivirinae</taxon>
        <taxon>Mimivirus</taxon>
        <taxon>Mimivirus bradfordmassiliense</taxon>
    </lineage>
</organism>
<name>SYM_MIMIV</name>
<gene>
    <name type="primary">MARS</name>
    <name type="ordered locus">MIMI_R639</name>
</gene>
<keyword id="KW-0030">Aminoacyl-tRNA synthetase</keyword>
<keyword id="KW-0067">ATP-binding</keyword>
<keyword id="KW-0436">Ligase</keyword>
<keyword id="KW-0547">Nucleotide-binding</keyword>
<keyword id="KW-0648">Protein biosynthesis</keyword>
<keyword id="KW-1185">Reference proteome</keyword>
<keyword id="KW-0694">RNA-binding</keyword>
<reference key="1">
    <citation type="journal article" date="2004" name="Science">
        <title>The 1.2-megabase genome sequence of Mimivirus.</title>
        <authorList>
            <person name="Raoult D."/>
            <person name="Audic S."/>
            <person name="Robert C."/>
            <person name="Abergel C."/>
            <person name="Renesto P."/>
            <person name="Ogata H."/>
            <person name="La Scola B."/>
            <person name="Susan M."/>
            <person name="Claverie J.-M."/>
        </authorList>
    </citation>
    <scope>NUCLEOTIDE SEQUENCE [LARGE SCALE GENOMIC DNA]</scope>
    <source>
        <strain>Rowbotham-Bradford</strain>
    </source>
</reference>
<reference key="2">
    <citation type="journal article" date="2007" name="J. Virol.">
        <title>Virus-encoded aminoacyl-tRNA synthetases: structural and functional characterization of Mimivirus TyrRS and MetRS.</title>
        <authorList>
            <person name="Abergel C."/>
            <person name="Rudinger-Thirion J."/>
            <person name="Giege R."/>
            <person name="Claverie J.-M."/>
        </authorList>
    </citation>
    <scope>CATALYTIC ACTIVITY</scope>
    <scope>KINETIC PARAMETERS</scope>
</reference>
<organismHost>
    <name type="scientific">Acanthamoeba polyphaga</name>
    <name type="common">Amoeba</name>
    <dbReference type="NCBI Taxonomy" id="5757"/>
</organismHost>
<sequence>MQKFFVTSALPYPNNSSPHLGNLVGALLSGDVYARFKRNQGHEVIYLCGTDEYGTTTMIRARKEGVTCRELCDKYFELHKKVYDWFNIEFDVFGRTSTTKQTEITWEIFNGLYNNGYIEEKTTVQAFCEKCDMYLADTYLKGYCYHDGCRENRVISNGDQCEICQKMIDVNKLINPFCSICLTPPIQKSTDHLYLSLDKLTPLVQQYLDRVEFDSRIMAISKAWLEIGLNPRCITRDLEWGTPIPINLDPKLEKYADKVFYVWFDAPIGYYSILANERDDWREWLNSGVTWVSTQAKDNVPFHSIVFPASVIGSNIELPLIDRICGTDYLLYEGQKFSKSQGVGLFGDKVAEISPKLGINEDYWRFYLMKIRPETQDSSFNLEEFVRIVKTDLVNNIGNFINRVFSLLEKTPYRDLNYQISPEYIEFIKKYEVSMDEFKFRDGLKICLEMSSRGNKFVQSTKPWTMIKDGLDTQEIMTEAVGICWILLNLLKPIIPKSACDMLSNLDTDNQNIFCLIGGSNINIRILNIIKLPFKNIDLKQLREFIEGKN</sequence>
<proteinExistence type="evidence at protein level"/>
<accession>Q5UR82</accession>
<dbReference type="EC" id="6.1.1.10"/>
<dbReference type="EMBL" id="AY653733">
    <property type="protein sequence ID" value="AAV50900.1"/>
    <property type="molecule type" value="Genomic_DNA"/>
</dbReference>
<dbReference type="SMR" id="Q5UR82"/>
<dbReference type="KEGG" id="vg:9925283"/>
<dbReference type="OrthoDB" id="29575at10239"/>
<dbReference type="SABIO-RK" id="Q5UR82"/>
<dbReference type="Proteomes" id="UP000001134">
    <property type="component" value="Genome"/>
</dbReference>
<dbReference type="GO" id="GO:0017101">
    <property type="term" value="C:aminoacyl-tRNA synthetase multienzyme complex"/>
    <property type="evidence" value="ECO:0007669"/>
    <property type="project" value="TreeGrafter"/>
</dbReference>
<dbReference type="GO" id="GO:0005524">
    <property type="term" value="F:ATP binding"/>
    <property type="evidence" value="ECO:0007669"/>
    <property type="project" value="UniProtKB-KW"/>
</dbReference>
<dbReference type="GO" id="GO:0004825">
    <property type="term" value="F:methionine-tRNA ligase activity"/>
    <property type="evidence" value="ECO:0000314"/>
    <property type="project" value="CAFA"/>
</dbReference>
<dbReference type="GO" id="GO:0003723">
    <property type="term" value="F:RNA binding"/>
    <property type="evidence" value="ECO:0007669"/>
    <property type="project" value="UniProtKB-KW"/>
</dbReference>
<dbReference type="GO" id="GO:0006431">
    <property type="term" value="P:methionyl-tRNA aminoacylation"/>
    <property type="evidence" value="ECO:0000314"/>
    <property type="project" value="CAFA"/>
</dbReference>
<dbReference type="CDD" id="cd00814">
    <property type="entry name" value="MetRS_core"/>
    <property type="match status" value="1"/>
</dbReference>
<dbReference type="Gene3D" id="3.40.50.620">
    <property type="entry name" value="HUPs"/>
    <property type="match status" value="1"/>
</dbReference>
<dbReference type="Gene3D" id="1.10.730.10">
    <property type="entry name" value="Isoleucyl-tRNA Synthetase, Domain 1"/>
    <property type="match status" value="1"/>
</dbReference>
<dbReference type="Gene3D" id="2.20.28.20">
    <property type="entry name" value="Methionyl-tRNA synthetase, Zn-domain"/>
    <property type="match status" value="1"/>
</dbReference>
<dbReference type="InterPro" id="IPR041872">
    <property type="entry name" value="Anticodon_Met"/>
</dbReference>
<dbReference type="InterPro" id="IPR023458">
    <property type="entry name" value="Met-tRNA_ligase_1"/>
</dbReference>
<dbReference type="InterPro" id="IPR014758">
    <property type="entry name" value="Met-tRNA_synth"/>
</dbReference>
<dbReference type="InterPro" id="IPR015413">
    <property type="entry name" value="Methionyl/Leucyl_tRNA_Synth"/>
</dbReference>
<dbReference type="InterPro" id="IPR033911">
    <property type="entry name" value="MetRS_core"/>
</dbReference>
<dbReference type="InterPro" id="IPR029038">
    <property type="entry name" value="MetRS_Zn"/>
</dbReference>
<dbReference type="InterPro" id="IPR014729">
    <property type="entry name" value="Rossmann-like_a/b/a_fold"/>
</dbReference>
<dbReference type="InterPro" id="IPR009080">
    <property type="entry name" value="tRNAsynth_Ia_anticodon-bd"/>
</dbReference>
<dbReference type="NCBIfam" id="TIGR00398">
    <property type="entry name" value="metG"/>
    <property type="match status" value="1"/>
</dbReference>
<dbReference type="PANTHER" id="PTHR45765">
    <property type="entry name" value="METHIONINE--TRNA LIGASE"/>
    <property type="match status" value="1"/>
</dbReference>
<dbReference type="PANTHER" id="PTHR45765:SF1">
    <property type="entry name" value="METHIONINE--TRNA LIGASE, CYTOPLASMIC"/>
    <property type="match status" value="1"/>
</dbReference>
<dbReference type="Pfam" id="PF19303">
    <property type="entry name" value="Anticodon_3"/>
    <property type="match status" value="1"/>
</dbReference>
<dbReference type="Pfam" id="PF09334">
    <property type="entry name" value="tRNA-synt_1g"/>
    <property type="match status" value="1"/>
</dbReference>
<dbReference type="PRINTS" id="PR01041">
    <property type="entry name" value="TRNASYNTHMET"/>
</dbReference>
<dbReference type="SUPFAM" id="SSF47323">
    <property type="entry name" value="Anticodon-binding domain of a subclass of class I aminoacyl-tRNA synthetases"/>
    <property type="match status" value="1"/>
</dbReference>
<dbReference type="SUPFAM" id="SSF52374">
    <property type="entry name" value="Nucleotidylyl transferase"/>
    <property type="match status" value="1"/>
</dbReference>
<feature type="chain" id="PRO_0000139273" description="Methionine--tRNA ligase">
    <location>
        <begin position="1"/>
        <end position="550"/>
    </location>
</feature>
<feature type="short sequence motif" description="'HIGH' region">
    <location>
        <begin position="10"/>
        <end position="22"/>
    </location>
</feature>
<feature type="short sequence motif" description="'KMSKS' region">
    <location>
        <begin position="336"/>
        <end position="340"/>
    </location>
</feature>
<feature type="binding site" evidence="1">
    <location>
        <position position="339"/>
    </location>
    <ligand>
        <name>ATP</name>
        <dbReference type="ChEBI" id="CHEBI:30616"/>
    </ligand>
</feature>
<evidence type="ECO:0000250" key="1"/>
<evidence type="ECO:0000269" key="2">
    <source>
    </source>
</evidence>
<evidence type="ECO:0000305" key="3"/>
<comment type="catalytic activity">
    <reaction evidence="2">
        <text>tRNA(Met) + L-methionine + ATP = L-methionyl-tRNA(Met) + AMP + diphosphate</text>
        <dbReference type="Rhea" id="RHEA:13481"/>
        <dbReference type="Rhea" id="RHEA-COMP:9667"/>
        <dbReference type="Rhea" id="RHEA-COMP:9698"/>
        <dbReference type="ChEBI" id="CHEBI:30616"/>
        <dbReference type="ChEBI" id="CHEBI:33019"/>
        <dbReference type="ChEBI" id="CHEBI:57844"/>
        <dbReference type="ChEBI" id="CHEBI:78442"/>
        <dbReference type="ChEBI" id="CHEBI:78530"/>
        <dbReference type="ChEBI" id="CHEBI:456215"/>
        <dbReference type="EC" id="6.1.1.10"/>
    </reaction>
</comment>
<comment type="biophysicochemical properties">
    <kinetics>
        <KM evidence="2">0.13 uM for tRNA-Met</KM>
    </kinetics>
</comment>
<comment type="similarity">
    <text evidence="3">Belongs to the class-I aminoacyl-tRNA synthetase family.</text>
</comment>
<protein>
    <recommendedName>
        <fullName>Methionine--tRNA ligase</fullName>
        <ecNumber>6.1.1.10</ecNumber>
    </recommendedName>
    <alternativeName>
        <fullName>Methionyl-tRNA synthetase</fullName>
        <shortName>MetRS</shortName>
    </alternativeName>
</protein>